<organism>
    <name type="scientific">Bos taurus</name>
    <name type="common">Bovine</name>
    <dbReference type="NCBI Taxonomy" id="9913"/>
    <lineage>
        <taxon>Eukaryota</taxon>
        <taxon>Metazoa</taxon>
        <taxon>Chordata</taxon>
        <taxon>Craniata</taxon>
        <taxon>Vertebrata</taxon>
        <taxon>Euteleostomi</taxon>
        <taxon>Mammalia</taxon>
        <taxon>Eutheria</taxon>
        <taxon>Laurasiatheria</taxon>
        <taxon>Artiodactyla</taxon>
        <taxon>Ruminantia</taxon>
        <taxon>Pecora</taxon>
        <taxon>Bovidae</taxon>
        <taxon>Bovinae</taxon>
        <taxon>Bos</taxon>
    </lineage>
</organism>
<keyword id="KW-0249">Electron transport</keyword>
<keyword id="KW-0967">Endosome</keyword>
<keyword id="KW-0325">Glycoprotein</keyword>
<keyword id="KW-0349">Heme</keyword>
<keyword id="KW-0408">Iron</keyword>
<keyword id="KW-0458">Lysosome</keyword>
<keyword id="KW-0472">Membrane</keyword>
<keyword id="KW-0479">Metal-binding</keyword>
<keyword id="KW-0560">Oxidoreductase</keyword>
<keyword id="KW-1185">Reference proteome</keyword>
<keyword id="KW-1278">Translocase</keyword>
<keyword id="KW-0812">Transmembrane</keyword>
<keyword id="KW-1133">Transmembrane helix</keyword>
<keyword id="KW-0813">Transport</keyword>
<accession>A5D9A7</accession>
<reference key="1">
    <citation type="journal article" date="2005" name="BMC Genomics">
        <title>Characterization of 954 bovine full-CDS cDNA sequences.</title>
        <authorList>
            <person name="Harhay G.P."/>
            <person name="Sonstegard T.S."/>
            <person name="Keele J.W."/>
            <person name="Heaton M.P."/>
            <person name="Clawson M.L."/>
            <person name="Snelling W.M."/>
            <person name="Wiedmann R.T."/>
            <person name="Van Tassell C.P."/>
            <person name="Smith T.P.L."/>
        </authorList>
    </citation>
    <scope>NUCLEOTIDE SEQUENCE [LARGE SCALE MRNA]</scope>
</reference>
<reference key="2">
    <citation type="submission" date="2007-06" db="EMBL/GenBank/DDBJ databases">
        <authorList>
            <consortium name="NIH - Mammalian Gene Collection (MGC) project"/>
        </authorList>
    </citation>
    <scope>NUCLEOTIDE SEQUENCE [LARGE SCALE MRNA]</scope>
    <source>
        <strain>Hereford</strain>
        <tissue>Fetal muscle</tissue>
    </source>
</reference>
<name>CYAC3_BOVIN</name>
<proteinExistence type="evidence at transcript level"/>
<evidence type="ECO:0000250" key="1">
    <source>
        <dbReference type="UniProtKB" id="Q53TN4"/>
    </source>
</evidence>
<evidence type="ECO:0000250" key="2">
    <source>
        <dbReference type="UniProtKB" id="Q6P1H1"/>
    </source>
</evidence>
<evidence type="ECO:0000255" key="3"/>
<evidence type="ECO:0000255" key="4">
    <source>
        <dbReference type="PROSITE-ProRule" id="PRU00242"/>
    </source>
</evidence>
<evidence type="ECO:0000256" key="5">
    <source>
        <dbReference type="SAM" id="MobiDB-lite"/>
    </source>
</evidence>
<evidence type="ECO:0000305" key="6"/>
<sequence>MAVGWFYLSVLALCSLGSMCILFTIYWMRYWHGGFAWDGSMLMFNWHPVLMVTGMVVLYSAASLVYRLPQSWVGPRLPWKSGHAAMHLLAFLLTVLGLHAVFEFHNHAKIPHLYSLHSWLGITTVFLFACQWFLGFSVFLLPWASMWLRSLLKPIHVFFGASILSLAIASVVSGINEKLFFSLKNGTKTYSNLPSEAVFANCAGMLVVVFGLLVLYILLASSWKRPEPGMQAEREPTRTRGRAGTPEVMLEGERGLAEPLLQKRS</sequence>
<dbReference type="EC" id="7.2.1.3" evidence="2"/>
<dbReference type="EMBL" id="BT030526">
    <property type="protein sequence ID" value="ABQ12966.1"/>
    <property type="molecule type" value="mRNA"/>
</dbReference>
<dbReference type="EMBL" id="BC146220">
    <property type="protein sequence ID" value="AAI46221.1"/>
    <property type="molecule type" value="mRNA"/>
</dbReference>
<dbReference type="RefSeq" id="NP_001092619.1">
    <property type="nucleotide sequence ID" value="NM_001099149.1"/>
</dbReference>
<dbReference type="RefSeq" id="XP_005227004.1">
    <property type="nucleotide sequence ID" value="XM_005226947.5"/>
</dbReference>
<dbReference type="RefSeq" id="XP_059739016.1">
    <property type="nucleotide sequence ID" value="XM_059883033.1"/>
</dbReference>
<dbReference type="SMR" id="A5D9A7"/>
<dbReference type="FunCoup" id="A5D9A7">
    <property type="interactions" value="985"/>
</dbReference>
<dbReference type="STRING" id="9913.ENSBTAP00000024228"/>
<dbReference type="GlyCosmos" id="A5D9A7">
    <property type="glycosylation" value="1 site, No reported glycans"/>
</dbReference>
<dbReference type="GlyGen" id="A5D9A7">
    <property type="glycosylation" value="1 site"/>
</dbReference>
<dbReference type="PaxDb" id="9913-ENSBTAP00000024228"/>
<dbReference type="GeneID" id="615893"/>
<dbReference type="KEGG" id="bta:615893"/>
<dbReference type="CTD" id="220002"/>
<dbReference type="VEuPathDB" id="HostDB:ENSBTAG00000018202"/>
<dbReference type="eggNOG" id="KOG1619">
    <property type="taxonomic scope" value="Eukaryota"/>
</dbReference>
<dbReference type="HOGENOM" id="CLU_069712_1_3_1"/>
<dbReference type="InParanoid" id="A5D9A7"/>
<dbReference type="OMA" id="LSTIYWM"/>
<dbReference type="OrthoDB" id="907479at2759"/>
<dbReference type="TreeFam" id="TF314222"/>
<dbReference type="Proteomes" id="UP000009136">
    <property type="component" value="Chromosome 29"/>
</dbReference>
<dbReference type="Bgee" id="ENSBTAG00000018202">
    <property type="expression patterns" value="Expressed in retropharyngeal lymph node and 105 other cell types or tissues"/>
</dbReference>
<dbReference type="GO" id="GO:0031902">
    <property type="term" value="C:late endosome membrane"/>
    <property type="evidence" value="ECO:0000250"/>
    <property type="project" value="UniProtKB"/>
</dbReference>
<dbReference type="GO" id="GO:0005765">
    <property type="term" value="C:lysosomal membrane"/>
    <property type="evidence" value="ECO:0000250"/>
    <property type="project" value="UniProtKB"/>
</dbReference>
<dbReference type="GO" id="GO:0046872">
    <property type="term" value="F:metal ion binding"/>
    <property type="evidence" value="ECO:0007669"/>
    <property type="project" value="UniProtKB-KW"/>
</dbReference>
<dbReference type="GO" id="GO:0016491">
    <property type="term" value="F:oxidoreductase activity"/>
    <property type="evidence" value="ECO:0000318"/>
    <property type="project" value="GO_Central"/>
</dbReference>
<dbReference type="GO" id="GO:0140571">
    <property type="term" value="F:transmembrane ascorbate ferrireductase activity"/>
    <property type="evidence" value="ECO:0000250"/>
    <property type="project" value="UniProtKB"/>
</dbReference>
<dbReference type="GO" id="GO:0006879">
    <property type="term" value="P:intracellular iron ion homeostasis"/>
    <property type="evidence" value="ECO:0000250"/>
    <property type="project" value="UniProtKB"/>
</dbReference>
<dbReference type="FunFam" id="1.20.120.1770:FF:000001">
    <property type="entry name" value="Cytochrome b reductase 1"/>
    <property type="match status" value="1"/>
</dbReference>
<dbReference type="Gene3D" id="1.20.120.1770">
    <property type="match status" value="1"/>
</dbReference>
<dbReference type="InterPro" id="IPR043205">
    <property type="entry name" value="CYB561/CYBRD1-like"/>
</dbReference>
<dbReference type="InterPro" id="IPR006593">
    <property type="entry name" value="Cyt_b561/ferric_Rdtase_TM"/>
</dbReference>
<dbReference type="PANTHER" id="PTHR10106">
    <property type="entry name" value="CYTOCHROME B561-RELATED"/>
    <property type="match status" value="1"/>
</dbReference>
<dbReference type="PANTHER" id="PTHR10106:SF38">
    <property type="entry name" value="LYSOSOMAL MEMBRANE ASCORBATE-DEPENDENT FERRIREDUCTASE CYB561A3"/>
    <property type="match status" value="1"/>
</dbReference>
<dbReference type="Pfam" id="PF03188">
    <property type="entry name" value="Cytochrom_B561"/>
    <property type="match status" value="1"/>
</dbReference>
<dbReference type="SMART" id="SM00665">
    <property type="entry name" value="B561"/>
    <property type="match status" value="1"/>
</dbReference>
<dbReference type="PROSITE" id="PS50939">
    <property type="entry name" value="CYTOCHROME_B561"/>
    <property type="match status" value="1"/>
</dbReference>
<gene>
    <name evidence="2" type="primary">CYB561A3</name>
</gene>
<protein>
    <recommendedName>
        <fullName evidence="6">Lysosomal membrane ascorbate-dependent ferrireductase CYB561A3</fullName>
        <ecNumber evidence="2">7.2.1.3</ecNumber>
    </recommendedName>
    <alternativeName>
        <fullName evidence="2">Cytochrome b ascorbate-dependent protein 3</fullName>
    </alternativeName>
    <alternativeName>
        <fullName evidence="2">Lysosomal cytochrome b</fullName>
        <shortName evidence="2">LCytb</shortName>
    </alternativeName>
</protein>
<feature type="chain" id="PRO_0000314837" description="Lysosomal membrane ascorbate-dependent ferrireductase CYB561A3">
    <location>
        <begin position="1"/>
        <end position="265"/>
    </location>
</feature>
<feature type="topological domain" description="Cytoplasmic" evidence="1">
    <location>
        <begin position="1"/>
        <end position="2"/>
    </location>
</feature>
<feature type="transmembrane region" description="Helical" evidence="3">
    <location>
        <begin position="3"/>
        <end position="23"/>
    </location>
</feature>
<feature type="topological domain" description="Lumenal" evidence="1">
    <location>
        <begin position="24"/>
        <end position="45"/>
    </location>
</feature>
<feature type="transmembrane region" description="Helical" evidence="3">
    <location>
        <begin position="46"/>
        <end position="66"/>
    </location>
</feature>
<feature type="topological domain" description="Cytoplasmic" evidence="1">
    <location>
        <begin position="67"/>
        <end position="83"/>
    </location>
</feature>
<feature type="transmembrane region" description="Helical" evidence="3">
    <location>
        <begin position="84"/>
        <end position="104"/>
    </location>
</feature>
<feature type="topological domain" description="Lumenal" evidence="1">
    <location>
        <begin position="105"/>
        <end position="119"/>
    </location>
</feature>
<feature type="transmembrane region" description="Helical" evidence="3">
    <location>
        <begin position="120"/>
        <end position="140"/>
    </location>
</feature>
<feature type="topological domain" description="Cytoplasmic" evidence="1">
    <location>
        <begin position="141"/>
        <end position="154"/>
    </location>
</feature>
<feature type="transmembrane region" description="Helical" evidence="3">
    <location>
        <begin position="155"/>
        <end position="175"/>
    </location>
</feature>
<feature type="topological domain" description="Lumenal" evidence="1">
    <location>
        <begin position="176"/>
        <end position="197"/>
    </location>
</feature>
<feature type="transmembrane region" description="Helical" evidence="3">
    <location>
        <begin position="198"/>
        <end position="218"/>
    </location>
</feature>
<feature type="topological domain" description="Cytoplasmic" evidence="1">
    <location>
        <begin position="219"/>
        <end position="265"/>
    </location>
</feature>
<feature type="domain" description="Cytochrome b561" evidence="4">
    <location>
        <begin position="12"/>
        <end position="219"/>
    </location>
</feature>
<feature type="region of interest" description="Disordered" evidence="5">
    <location>
        <begin position="228"/>
        <end position="265"/>
    </location>
</feature>
<feature type="compositionally biased region" description="Basic and acidic residues" evidence="5">
    <location>
        <begin position="228"/>
        <end position="238"/>
    </location>
</feature>
<feature type="binding site" description="axial binding residue" evidence="1">
    <location>
        <position position="47"/>
    </location>
    <ligand>
        <name>heme b</name>
        <dbReference type="ChEBI" id="CHEBI:60344"/>
        <label>1</label>
    </ligand>
    <ligandPart>
        <name>Fe</name>
        <dbReference type="ChEBI" id="CHEBI:18248"/>
    </ligandPart>
</feature>
<feature type="binding site" evidence="1">
    <location>
        <position position="67"/>
    </location>
    <ligand>
        <name>heme b</name>
        <dbReference type="ChEBI" id="CHEBI:60344"/>
        <label>2</label>
    </ligand>
</feature>
<feature type="binding site" evidence="1">
    <location>
        <position position="76"/>
    </location>
    <ligand>
        <name>L-ascorbate</name>
        <dbReference type="ChEBI" id="CHEBI:38290"/>
    </ligand>
</feature>
<feature type="binding site" evidence="1">
    <location>
        <position position="80"/>
    </location>
    <ligand>
        <name>L-ascorbate</name>
        <dbReference type="ChEBI" id="CHEBI:38290"/>
    </ligand>
</feature>
<feature type="binding site" description="axial binding residue" evidence="1">
    <location>
        <position position="83"/>
    </location>
    <ligand>
        <name>heme b</name>
        <dbReference type="ChEBI" id="CHEBI:60344"/>
        <label>2</label>
    </ligand>
    <ligandPart>
        <name>Fe</name>
        <dbReference type="ChEBI" id="CHEBI:18248"/>
    </ligandPart>
</feature>
<feature type="binding site" evidence="1">
    <location>
        <begin position="112"/>
        <end position="115"/>
    </location>
    <ligand>
        <name>heme b</name>
        <dbReference type="ChEBI" id="CHEBI:60344"/>
        <label>1</label>
    </ligand>
</feature>
<feature type="binding site" description="axial binding residue" evidence="1">
    <location>
        <position position="117"/>
    </location>
    <ligand>
        <name>heme b</name>
        <dbReference type="ChEBI" id="CHEBI:60344"/>
        <label>1</label>
    </ligand>
    <ligandPart>
        <name>Fe</name>
        <dbReference type="ChEBI" id="CHEBI:18248"/>
    </ligandPart>
</feature>
<feature type="binding site" evidence="1">
    <location>
        <position position="149"/>
    </location>
    <ligand>
        <name>L-ascorbate</name>
        <dbReference type="ChEBI" id="CHEBI:38290"/>
    </ligand>
</feature>
<feature type="binding site" description="axial binding residue" evidence="1">
    <location>
        <position position="156"/>
    </location>
    <ligand>
        <name>heme b</name>
        <dbReference type="ChEBI" id="CHEBI:60344"/>
        <label>2</label>
    </ligand>
    <ligandPart>
        <name>Fe</name>
        <dbReference type="ChEBI" id="CHEBI:18248"/>
    </ligandPart>
</feature>
<feature type="binding site" evidence="1">
    <location>
        <position position="177"/>
    </location>
    <ligand>
        <name>heme b</name>
        <dbReference type="ChEBI" id="CHEBI:60344"/>
        <label>1</label>
    </ligand>
</feature>
<feature type="binding site" evidence="1">
    <location>
        <position position="224"/>
    </location>
    <ligand>
        <name>heme b</name>
        <dbReference type="ChEBI" id="CHEBI:60344"/>
        <label>2</label>
    </ligand>
</feature>
<feature type="glycosylation site" description="N-linked (GlcNAc...) asparagine" evidence="3">
    <location>
        <position position="185"/>
    </location>
</feature>
<comment type="function">
    <text evidence="2">Transmembrane reductase that uses ascorbate as an electron donor in the cytoplasm and transfers electrons across membranes to reduce iron cations Fe(3+) into Fe(2+) in the lumen of the late endosome and lysosome. Reduced iron can then be extruded from the late endosome and lysosome to the cytoplasm by divalent metal-specific transporters. It is therefore most probably involved in endosomal and lysosomal cellular iron homeostasis.</text>
</comment>
<comment type="catalytic activity">
    <reaction evidence="2">
        <text>Fe(3+)(out) + L-ascorbate(in) = monodehydro-L-ascorbate radical(in) + Fe(2+)(out) + H(+)</text>
        <dbReference type="Rhea" id="RHEA:30403"/>
        <dbReference type="ChEBI" id="CHEBI:15378"/>
        <dbReference type="ChEBI" id="CHEBI:29033"/>
        <dbReference type="ChEBI" id="CHEBI:29034"/>
        <dbReference type="ChEBI" id="CHEBI:38290"/>
        <dbReference type="ChEBI" id="CHEBI:59513"/>
        <dbReference type="EC" id="7.2.1.3"/>
    </reaction>
    <physiologicalReaction direction="left-to-right" evidence="2">
        <dbReference type="Rhea" id="RHEA:30404"/>
    </physiologicalReaction>
</comment>
<comment type="cofactor">
    <cofactor evidence="1">
        <name>heme b</name>
        <dbReference type="ChEBI" id="CHEBI:60344"/>
    </cofactor>
    <text evidence="1">Binds 2 heme b groups non-covalently.</text>
</comment>
<comment type="subunit">
    <text evidence="1">Homodimer.</text>
</comment>
<comment type="subcellular location">
    <subcellularLocation>
        <location evidence="2">Late endosome membrane</location>
        <topology evidence="1">Multi-pass membrane protein</topology>
    </subcellularLocation>
    <subcellularLocation>
        <location evidence="2">Lysosome membrane</location>
        <topology evidence="1">Multi-pass membrane protein</topology>
    </subcellularLocation>
</comment>
<comment type="PTM">
    <text evidence="2">N-glycosylated.</text>
</comment>